<dbReference type="EMBL" id="CP000804">
    <property type="protein sequence ID" value="ABU56696.1"/>
    <property type="molecule type" value="Genomic_DNA"/>
</dbReference>
<dbReference type="STRING" id="383372.Rcas_0567"/>
<dbReference type="KEGG" id="rca:Rcas_0567"/>
<dbReference type="eggNOG" id="COG3002">
    <property type="taxonomic scope" value="Bacteria"/>
</dbReference>
<dbReference type="HOGENOM" id="CLU_009885_1_0_0"/>
<dbReference type="Proteomes" id="UP000000263">
    <property type="component" value="Chromosome"/>
</dbReference>
<dbReference type="GO" id="GO:0005886">
    <property type="term" value="C:plasma membrane"/>
    <property type="evidence" value="ECO:0007669"/>
    <property type="project" value="UniProtKB-SubCell"/>
</dbReference>
<dbReference type="GO" id="GO:0008270">
    <property type="term" value="F:zinc ion binding"/>
    <property type="evidence" value="ECO:0007669"/>
    <property type="project" value="UniProtKB-UniRule"/>
</dbReference>
<dbReference type="HAMAP" id="MF_01871">
    <property type="entry name" value="DabA"/>
    <property type="match status" value="1"/>
</dbReference>
<dbReference type="InterPro" id="IPR018752">
    <property type="entry name" value="DabA"/>
</dbReference>
<dbReference type="PANTHER" id="PTHR38344:SF1">
    <property type="entry name" value="INORGANIC CARBON TRANSPORTER SUBUNIT DABA-RELATED"/>
    <property type="match status" value="1"/>
</dbReference>
<dbReference type="PANTHER" id="PTHR38344">
    <property type="entry name" value="UPF0753 PROTEIN AQ_863"/>
    <property type="match status" value="1"/>
</dbReference>
<dbReference type="Pfam" id="PF10070">
    <property type="entry name" value="DabA"/>
    <property type="match status" value="1"/>
</dbReference>
<evidence type="ECO:0000255" key="1">
    <source>
        <dbReference type="HAMAP-Rule" id="MF_01871"/>
    </source>
</evidence>
<keyword id="KW-1003">Cell membrane</keyword>
<keyword id="KW-0472">Membrane</keyword>
<keyword id="KW-0479">Metal-binding</keyword>
<keyword id="KW-1185">Reference proteome</keyword>
<keyword id="KW-0813">Transport</keyword>
<keyword id="KW-0862">Zinc</keyword>
<comment type="function">
    <text evidence="1">Part of an energy-coupled inorganic carbon pump.</text>
</comment>
<comment type="cofactor">
    <cofactor evidence="1">
        <name>Zn(2+)</name>
        <dbReference type="ChEBI" id="CHEBI:29105"/>
    </cofactor>
</comment>
<comment type="subunit">
    <text evidence="1">Forms a complex with DabB.</text>
</comment>
<comment type="subcellular location">
    <subcellularLocation>
        <location evidence="1">Cell membrane</location>
        <topology evidence="1">Peripheral membrane protein</topology>
    </subcellularLocation>
</comment>
<comment type="similarity">
    <text evidence="1">Belongs to the inorganic carbon transporter (TC 9.A.2) DabA family.</text>
</comment>
<gene>
    <name evidence="1" type="primary">dabA</name>
    <name type="ordered locus">Rcas_0567</name>
</gene>
<reference key="1">
    <citation type="submission" date="2007-08" db="EMBL/GenBank/DDBJ databases">
        <title>Complete sequence of Roseiflexus castenholzii DSM 13941.</title>
        <authorList>
            <consortium name="US DOE Joint Genome Institute"/>
            <person name="Copeland A."/>
            <person name="Lucas S."/>
            <person name="Lapidus A."/>
            <person name="Barry K."/>
            <person name="Glavina del Rio T."/>
            <person name="Dalin E."/>
            <person name="Tice H."/>
            <person name="Pitluck S."/>
            <person name="Thompson L.S."/>
            <person name="Brettin T."/>
            <person name="Bruce D."/>
            <person name="Detter J.C."/>
            <person name="Han C."/>
            <person name="Tapia R."/>
            <person name="Schmutz J."/>
            <person name="Larimer F."/>
            <person name="Land M."/>
            <person name="Hauser L."/>
            <person name="Kyrpides N."/>
            <person name="Mikhailova N."/>
            <person name="Bryant D.A."/>
            <person name="Hanada S."/>
            <person name="Tsukatani Y."/>
            <person name="Richardson P."/>
        </authorList>
    </citation>
    <scope>NUCLEOTIDE SEQUENCE [LARGE SCALE GENOMIC DNA]</scope>
    <source>
        <strain>DSM 13941 / HLO8</strain>
    </source>
</reference>
<protein>
    <recommendedName>
        <fullName evidence="1">Probable inorganic carbon transporter subunit DabA</fullName>
    </recommendedName>
</protein>
<organism>
    <name type="scientific">Roseiflexus castenholzii (strain DSM 13941 / HLO8)</name>
    <dbReference type="NCBI Taxonomy" id="383372"/>
    <lineage>
        <taxon>Bacteria</taxon>
        <taxon>Bacillati</taxon>
        <taxon>Chloroflexota</taxon>
        <taxon>Chloroflexia</taxon>
        <taxon>Chloroflexales</taxon>
        <taxon>Roseiflexineae</taxon>
        <taxon>Roseiflexaceae</taxon>
        <taxon>Roseiflexus</taxon>
    </lineage>
</organism>
<feature type="chain" id="PRO_0000387295" description="Probable inorganic carbon transporter subunit DabA">
    <location>
        <begin position="1"/>
        <end position="840"/>
    </location>
</feature>
<feature type="binding site" evidence="1">
    <location>
        <position position="355"/>
    </location>
    <ligand>
        <name>Zn(2+)</name>
        <dbReference type="ChEBI" id="CHEBI:29105"/>
    </ligand>
</feature>
<feature type="binding site" evidence="1">
    <location>
        <position position="357"/>
    </location>
    <ligand>
        <name>Zn(2+)</name>
        <dbReference type="ChEBI" id="CHEBI:29105"/>
    </ligand>
</feature>
<feature type="binding site" evidence="1">
    <location>
        <position position="539"/>
    </location>
    <ligand>
        <name>Zn(2+)</name>
        <dbReference type="ChEBI" id="CHEBI:29105"/>
    </ligand>
</feature>
<feature type="binding site" evidence="1">
    <location>
        <position position="554"/>
    </location>
    <ligand>
        <name>Zn(2+)</name>
        <dbReference type="ChEBI" id="CHEBI:29105"/>
    </ligand>
</feature>
<sequence length="840" mass="91912">MMMHMAETRTRPAPMMAASLQMVTADMIAAAAKRAEQRIAPLWPLRNFVAVNPYLGLLDYSFETAAELLARRAGARTTAPRAFYAQAIRDGRITDADLASALAEGSPSPGAPATVEALKAFALSNAPEPTFTTLPTVADVAREITGVNWADIVTDSISAWAGAYFDLGQSYWRSPWKPMSAYAAWRAEATYDRTPHIRGAQGFHQALRELPESAMETIIAAVEMLHIPADGLEAYLHRLLLTIHGWAGYARYLRWEAELYGGADHTLTDLLAIRLVWEVALWRSFASRGMAEAWRTRSHELVGDQLDAALQRAIAGDLLLQRAFEKAYQRQLFACLGTPKPVKHATRKRAQAAFCIDVRSEIFRRALETVTDEIETIGFAGFFGFPIEYVPLAETRGGAQCPVLLTPQFVIAESVGGASETEVTAVIEKRALNQRVAKVWRMFKFGPVSCFGFVGPVGLAYVRKLLLDTLGITRPVPHPATFGLDARTRERVKPSLEPRAIGGRTTGMSPEQRVNVAEGALKAMSLTSNFARLVLLAGHGSTTVNNPHATGLDCGACGGHTGEANVRVAVQILNDPAARTGLKARGIVIPDDTVFVAGLHDTTTDDVTIFDKNDIPASHADDLRRLEADLAAAGRLARAERAALLKIDPKGNIDGAVRQRSRDWSQVRPEWGLAGCAAFIAAPRDRTAGAKLDGRSFLHNYDWRQDEGFGVLELIMTAPMIVASWINLQYYGSTVDNRVFGSGNKTLHNVVGTLGVLEGNSGDLRVGLPWQSVHDGERYVHEPMRLHVMIEAPIEAMTAIIARHEQVRQLLDNGWLYLFALDERGKVTHTYAGGLRWEAC</sequence>
<proteinExistence type="inferred from homology"/>
<name>DABA_ROSCS</name>
<accession>A7NGU9</accession>